<keyword id="KW-0963">Cytoplasm</keyword>
<keyword id="KW-0217">Developmental protein</keyword>
<keyword id="KW-0238">DNA-binding</keyword>
<keyword id="KW-0479">Metal-binding</keyword>
<keyword id="KW-0539">Nucleus</keyword>
<keyword id="KW-1185">Reference proteome</keyword>
<keyword id="KW-0804">Transcription</keyword>
<keyword id="KW-0805">Transcription regulation</keyword>
<keyword id="KW-0862">Zinc</keyword>
<reference key="1">
    <citation type="journal article" date="1999" name="Dev. Dyn.">
        <title>Smad1 and smad5 have distinct roles during dorsoventral patterning of the zebrafish embryo.</title>
        <authorList>
            <person name="Dick A."/>
            <person name="Meier A."/>
            <person name="Hammerschmidt M."/>
        </authorList>
    </citation>
    <scope>NUCLEOTIDE SEQUENCE [MRNA]</scope>
    <scope>FUNCTION</scope>
    <scope>DEVELOPMENTAL STAGE</scope>
    <source>
        <strain>AB</strain>
        <tissue>Embryo</tissue>
    </source>
</reference>
<reference key="2">
    <citation type="journal article" date="1999" name="Mech. Dev.">
        <title>Characterization of zebrafish smad1, smad2 and smad5: the amino-terminus of Smad1 and Smad5 is required for specific function in the embryo.</title>
        <authorList>
            <person name="Mueller F."/>
            <person name="Blader P."/>
            <person name="Rastegar S."/>
            <person name="Fischer N."/>
            <person name="Knoechel W."/>
            <person name="Straehle U."/>
        </authorList>
    </citation>
    <scope>NUCLEOTIDE SEQUENCE [MRNA]</scope>
    <scope>FUNCTION</scope>
    <scope>DEVELOPMENTAL STAGE</scope>
    <source>
        <tissue>Embryo</tissue>
    </source>
</reference>
<name>SMAD1_DANRE</name>
<proteinExistence type="evidence at transcript level"/>
<feature type="chain" id="PRO_0000090851" description="Mothers against decapentaplegic homolog 1">
    <location>
        <begin position="1"/>
        <end position="472"/>
    </location>
</feature>
<feature type="domain" description="MH1" evidence="3">
    <location>
        <begin position="12"/>
        <end position="136"/>
    </location>
</feature>
<feature type="domain" description="MH2" evidence="4">
    <location>
        <begin position="278"/>
        <end position="472"/>
    </location>
</feature>
<feature type="region of interest" description="Disordered" evidence="5">
    <location>
        <begin position="158"/>
        <end position="238"/>
    </location>
</feature>
<feature type="compositionally biased region" description="Polar residues" evidence="5">
    <location>
        <begin position="169"/>
        <end position="182"/>
    </location>
</feature>
<feature type="compositionally biased region" description="Low complexity" evidence="5">
    <location>
        <begin position="188"/>
        <end position="226"/>
    </location>
</feature>
<feature type="compositionally biased region" description="Pro residues" evidence="5">
    <location>
        <begin position="227"/>
        <end position="238"/>
    </location>
</feature>
<feature type="binding site" evidence="1">
    <location>
        <position position="64"/>
    </location>
    <ligand>
        <name>Zn(2+)</name>
        <dbReference type="ChEBI" id="CHEBI:29105"/>
    </ligand>
</feature>
<feature type="binding site" evidence="1">
    <location>
        <position position="109"/>
    </location>
    <ligand>
        <name>Zn(2+)</name>
        <dbReference type="ChEBI" id="CHEBI:29105"/>
    </ligand>
</feature>
<feature type="binding site" evidence="1">
    <location>
        <position position="121"/>
    </location>
    <ligand>
        <name>Zn(2+)</name>
        <dbReference type="ChEBI" id="CHEBI:29105"/>
    </ligand>
</feature>
<feature type="binding site" evidence="1">
    <location>
        <position position="126"/>
    </location>
    <ligand>
        <name>Zn(2+)</name>
        <dbReference type="ChEBI" id="CHEBI:29105"/>
    </ligand>
</feature>
<feature type="sequence conflict" description="In Ref. 2; AAF06361." evidence="8" ref="2">
    <original>G</original>
    <variation>V</variation>
    <location>
        <position position="82"/>
    </location>
</feature>
<comment type="function">
    <text evidence="6 7">Involved in ventralization. May mediate Bmp2b signaling during embryonic dorsal-ventral pattern formation, and may itself be a transcriptional target for Smad5-mediated Bmp2b signaling.</text>
</comment>
<comment type="subunit">
    <text evidence="1">May form trimers with another Smad1 and the co-Smad Smad4.</text>
</comment>
<comment type="subcellular location">
    <subcellularLocation>
        <location evidence="2">Cytoplasm</location>
    </subcellularLocation>
    <subcellularLocation>
        <location evidence="2">Nucleus</location>
    </subcellularLocation>
    <text evidence="2">In the cytoplasm in the absence of ligand. Migration to the nucleus when complexed with Smad4.</text>
</comment>
<comment type="developmental stage">
    <text evidence="6 7">Zygotically expressed. First detected 1 hour after the midblastula transition. During gastrulation, expression is restricted to ventral regions. Later, expressed in the somites, eyes and a subset of dorsal cells in the hindbrain. Levels increase until the end of gastrulation and then remain high.</text>
</comment>
<comment type="similarity">
    <text evidence="8">Belongs to the dwarfin/SMAD family.</text>
</comment>
<accession>Q9I8V2</accession>
<accession>Q9PUQ3</accession>
<dbReference type="EMBL" id="AF174434">
    <property type="protein sequence ID" value="AAF82402.1"/>
    <property type="molecule type" value="mRNA"/>
</dbReference>
<dbReference type="EMBL" id="AF167985">
    <property type="protein sequence ID" value="AAF06361.1"/>
    <property type="molecule type" value="mRNA"/>
</dbReference>
<dbReference type="RefSeq" id="NP_571431.1">
    <property type="nucleotide sequence ID" value="NM_131356.1"/>
</dbReference>
<dbReference type="SMR" id="Q9I8V2"/>
<dbReference type="FunCoup" id="Q9I8V2">
    <property type="interactions" value="393"/>
</dbReference>
<dbReference type="STRING" id="7955.ENSDARP00000030150"/>
<dbReference type="PaxDb" id="7955-ENSDARP00000109288"/>
<dbReference type="GeneID" id="30628"/>
<dbReference type="KEGG" id="dre:30628"/>
<dbReference type="AGR" id="ZFIN:ZDB-GENE-991119-8"/>
<dbReference type="CTD" id="4086"/>
<dbReference type="ZFIN" id="ZDB-GENE-991119-8">
    <property type="gene designation" value="smad1"/>
</dbReference>
<dbReference type="eggNOG" id="KOG3701">
    <property type="taxonomic scope" value="Eukaryota"/>
</dbReference>
<dbReference type="InParanoid" id="Q9I8V2"/>
<dbReference type="OrthoDB" id="5794312at2759"/>
<dbReference type="Reactome" id="R-DRE-201451">
    <property type="pathway name" value="Signaling by BMP"/>
</dbReference>
<dbReference type="Reactome" id="R-DRE-5689880">
    <property type="pathway name" value="Ub-specific processing proteases"/>
</dbReference>
<dbReference type="SignaLink" id="Q9I8V2"/>
<dbReference type="PRO" id="PR:Q9I8V2"/>
<dbReference type="Proteomes" id="UP000000437">
    <property type="component" value="Alternate scaffold 1"/>
</dbReference>
<dbReference type="Proteomes" id="UP000000437">
    <property type="component" value="Chromosome 1"/>
</dbReference>
<dbReference type="GO" id="GO:0005737">
    <property type="term" value="C:cytoplasm"/>
    <property type="evidence" value="ECO:0007669"/>
    <property type="project" value="UniProtKB-SubCell"/>
</dbReference>
<dbReference type="GO" id="GO:0071144">
    <property type="term" value="C:heteromeric SMAD protein complex"/>
    <property type="evidence" value="ECO:0000318"/>
    <property type="project" value="GO_Central"/>
</dbReference>
<dbReference type="GO" id="GO:0003700">
    <property type="term" value="F:DNA-binding transcription factor activity"/>
    <property type="evidence" value="ECO:0000303"/>
    <property type="project" value="UniProtKB"/>
</dbReference>
<dbReference type="GO" id="GO:0000981">
    <property type="term" value="F:DNA-binding transcription factor activity, RNA polymerase II-specific"/>
    <property type="evidence" value="ECO:0000318"/>
    <property type="project" value="GO_Central"/>
</dbReference>
<dbReference type="GO" id="GO:0070411">
    <property type="term" value="F:I-SMAD binding"/>
    <property type="evidence" value="ECO:0000318"/>
    <property type="project" value="GO_Central"/>
</dbReference>
<dbReference type="GO" id="GO:0046872">
    <property type="term" value="F:metal ion binding"/>
    <property type="evidence" value="ECO:0007669"/>
    <property type="project" value="UniProtKB-KW"/>
</dbReference>
<dbReference type="GO" id="GO:0000978">
    <property type="term" value="F:RNA polymerase II cis-regulatory region sequence-specific DNA binding"/>
    <property type="evidence" value="ECO:0000318"/>
    <property type="project" value="GO_Central"/>
</dbReference>
<dbReference type="GO" id="GO:0000976">
    <property type="term" value="F:transcription cis-regulatory region binding"/>
    <property type="evidence" value="ECO:0000314"/>
    <property type="project" value="ZFIN"/>
</dbReference>
<dbReference type="GO" id="GO:0009653">
    <property type="term" value="P:anatomical structure morphogenesis"/>
    <property type="evidence" value="ECO:0000318"/>
    <property type="project" value="GO_Central"/>
</dbReference>
<dbReference type="GO" id="GO:0030509">
    <property type="term" value="P:BMP signaling pathway"/>
    <property type="evidence" value="ECO:0000316"/>
    <property type="project" value="UniProtKB"/>
</dbReference>
<dbReference type="GO" id="GO:0030154">
    <property type="term" value="P:cell differentiation"/>
    <property type="evidence" value="ECO:0000318"/>
    <property type="project" value="GO_Central"/>
</dbReference>
<dbReference type="GO" id="GO:0009953">
    <property type="term" value="P:dorsal/ventral pattern formation"/>
    <property type="evidence" value="ECO:0000316"/>
    <property type="project" value="ZFIN"/>
</dbReference>
<dbReference type="GO" id="GO:0009880">
    <property type="term" value="P:embryonic pattern specification"/>
    <property type="evidence" value="ECO:0000315"/>
    <property type="project" value="UniProtKB"/>
</dbReference>
<dbReference type="GO" id="GO:0061515">
    <property type="term" value="P:myeloid cell development"/>
    <property type="evidence" value="ECO:0000315"/>
    <property type="project" value="ZFIN"/>
</dbReference>
<dbReference type="GO" id="GO:0045892">
    <property type="term" value="P:negative regulation of DNA-templated transcription"/>
    <property type="evidence" value="ECO:0000314"/>
    <property type="project" value="ZFIN"/>
</dbReference>
<dbReference type="GO" id="GO:0006355">
    <property type="term" value="P:regulation of DNA-templated transcription"/>
    <property type="evidence" value="ECO:0000314"/>
    <property type="project" value="ZFIN"/>
</dbReference>
<dbReference type="GO" id="GO:0006357">
    <property type="term" value="P:regulation of transcription by RNA polymerase II"/>
    <property type="evidence" value="ECO:0000318"/>
    <property type="project" value="GO_Central"/>
</dbReference>
<dbReference type="GO" id="GO:0060395">
    <property type="term" value="P:SMAD protein signal transduction"/>
    <property type="evidence" value="ECO:0000318"/>
    <property type="project" value="GO_Central"/>
</dbReference>
<dbReference type="GO" id="GO:0007179">
    <property type="term" value="P:transforming growth factor beta receptor signaling pathway"/>
    <property type="evidence" value="ECO:0000318"/>
    <property type="project" value="GO_Central"/>
</dbReference>
<dbReference type="CDD" id="cd10490">
    <property type="entry name" value="MH1_SMAD_1_5_9"/>
    <property type="match status" value="1"/>
</dbReference>
<dbReference type="CDD" id="cd10497">
    <property type="entry name" value="MH2_SMAD_1_5_9"/>
    <property type="match status" value="1"/>
</dbReference>
<dbReference type="FunFam" id="2.60.200.10:FF:000001">
    <property type="entry name" value="Mothers against decapentaplegic homolog"/>
    <property type="match status" value="1"/>
</dbReference>
<dbReference type="FunFam" id="3.90.520.10:FF:000001">
    <property type="entry name" value="Mothers against decapentaplegic homolog"/>
    <property type="match status" value="1"/>
</dbReference>
<dbReference type="Gene3D" id="2.60.200.10">
    <property type="match status" value="1"/>
</dbReference>
<dbReference type="Gene3D" id="3.90.520.10">
    <property type="entry name" value="SMAD MH1 domain"/>
    <property type="match status" value="1"/>
</dbReference>
<dbReference type="InterPro" id="IPR013790">
    <property type="entry name" value="Dwarfin"/>
</dbReference>
<dbReference type="InterPro" id="IPR003619">
    <property type="entry name" value="MAD_homology1_Dwarfin-type"/>
</dbReference>
<dbReference type="InterPro" id="IPR013019">
    <property type="entry name" value="MAD_homology_MH1"/>
</dbReference>
<dbReference type="InterPro" id="IPR017855">
    <property type="entry name" value="SMAD-like_dom_sf"/>
</dbReference>
<dbReference type="InterPro" id="IPR001132">
    <property type="entry name" value="SMAD_dom_Dwarfin-type"/>
</dbReference>
<dbReference type="InterPro" id="IPR008984">
    <property type="entry name" value="SMAD_FHA_dom_sf"/>
</dbReference>
<dbReference type="InterPro" id="IPR036578">
    <property type="entry name" value="SMAD_MH1_sf"/>
</dbReference>
<dbReference type="PANTHER" id="PTHR13703:SF23">
    <property type="entry name" value="MOTHERS AGAINST DECAPENTAPLEGIC HOMOLOG 1"/>
    <property type="match status" value="1"/>
</dbReference>
<dbReference type="PANTHER" id="PTHR13703">
    <property type="entry name" value="SMAD"/>
    <property type="match status" value="1"/>
</dbReference>
<dbReference type="Pfam" id="PF03165">
    <property type="entry name" value="MH1"/>
    <property type="match status" value="1"/>
</dbReference>
<dbReference type="Pfam" id="PF03166">
    <property type="entry name" value="MH2"/>
    <property type="match status" value="1"/>
</dbReference>
<dbReference type="SMART" id="SM00523">
    <property type="entry name" value="DWA"/>
    <property type="match status" value="1"/>
</dbReference>
<dbReference type="SMART" id="SM00524">
    <property type="entry name" value="DWB"/>
    <property type="match status" value="1"/>
</dbReference>
<dbReference type="SUPFAM" id="SSF56366">
    <property type="entry name" value="SMAD MH1 domain"/>
    <property type="match status" value="1"/>
</dbReference>
<dbReference type="SUPFAM" id="SSF49879">
    <property type="entry name" value="SMAD/FHA domain"/>
    <property type="match status" value="1"/>
</dbReference>
<dbReference type="PROSITE" id="PS51075">
    <property type="entry name" value="MH1"/>
    <property type="match status" value="1"/>
</dbReference>
<dbReference type="PROSITE" id="PS51076">
    <property type="entry name" value="MH2"/>
    <property type="match status" value="1"/>
</dbReference>
<protein>
    <recommendedName>
        <fullName>Mothers against decapentaplegic homolog 1</fullName>
        <shortName>MAD homolog 1</shortName>
        <shortName>Mothers against DPP homolog 1</shortName>
    </recommendedName>
    <alternativeName>
        <fullName>SMAD family member 1</fullName>
        <shortName>SMAD 1</shortName>
        <shortName>Smad1</shortName>
    </alternativeName>
</protein>
<gene>
    <name type="primary">smad1</name>
    <name type="synonym">madh1</name>
</gene>
<organism>
    <name type="scientific">Danio rerio</name>
    <name type="common">Zebrafish</name>
    <name type="synonym">Brachydanio rerio</name>
    <dbReference type="NCBI Taxonomy" id="7955"/>
    <lineage>
        <taxon>Eukaryota</taxon>
        <taxon>Metazoa</taxon>
        <taxon>Chordata</taxon>
        <taxon>Craniata</taxon>
        <taxon>Vertebrata</taxon>
        <taxon>Euteleostomi</taxon>
        <taxon>Actinopterygii</taxon>
        <taxon>Neopterygii</taxon>
        <taxon>Teleostei</taxon>
        <taxon>Ostariophysi</taxon>
        <taxon>Cypriniformes</taxon>
        <taxon>Danionidae</taxon>
        <taxon>Danioninae</taxon>
        <taxon>Danio</taxon>
    </lineage>
</organism>
<evidence type="ECO:0000250" key="1"/>
<evidence type="ECO:0000250" key="2">
    <source>
        <dbReference type="UniProtKB" id="Q15797"/>
    </source>
</evidence>
<evidence type="ECO:0000255" key="3">
    <source>
        <dbReference type="PROSITE-ProRule" id="PRU00438"/>
    </source>
</evidence>
<evidence type="ECO:0000255" key="4">
    <source>
        <dbReference type="PROSITE-ProRule" id="PRU00439"/>
    </source>
</evidence>
<evidence type="ECO:0000256" key="5">
    <source>
        <dbReference type="SAM" id="MobiDB-lite"/>
    </source>
</evidence>
<evidence type="ECO:0000269" key="6">
    <source>
    </source>
</evidence>
<evidence type="ECO:0000269" key="7">
    <source>
    </source>
</evidence>
<evidence type="ECO:0000305" key="8"/>
<sequence length="472" mass="53066">MNVTSLFSFTSPAVKRLLGWKQGDEEEKWAEKAVDALVKKLKKKKGAMEELERALSCPGQPSNCVTIPRSLDGRLQVSHRKGLPHVIYCRVWRWPDLQSHHELKALECCEFPFGSKQKDVCINPYHYKRVDSPVLPPVLVPRNSEFNAKLSMLPRFRNPLHQTEPPMPQNATFPDSFPQQPANALPFTPNSPTNSYPSSPNSGTGSTATFPHSPSSSDPGSPFQMPETPPPAYMPPEEPMTQDCPQPMDTNLLAPNLPLEISNRTDVHPVAYQEPKHWCSIVYYELNNRVGEAFLASSTSVLVDGFTDPSNNRNRFCLGLLSNVNRNSTIENTRRHIGKGVHLYYVGGEVYAECLSDSSIFVQSRNCNYHHGFHPTTVCKIPSRCSLKIFNNQEFAELLAQSVNHGFEAVYELTKMCTIRMSFVKGWGAKYHRQDVTSTPCWIEIHLHGPLQWLDKVLTQMGSPHNPISSVS</sequence>